<gene>
    <name type="ordered locus">RC1017</name>
</gene>
<reference key="1">
    <citation type="journal article" date="2001" name="Science">
        <title>Mechanisms of evolution in Rickettsia conorii and R. prowazekii.</title>
        <authorList>
            <person name="Ogata H."/>
            <person name="Audic S."/>
            <person name="Renesto-Audiffren P."/>
            <person name="Fournier P.-E."/>
            <person name="Barbe V."/>
            <person name="Samson D."/>
            <person name="Roux V."/>
            <person name="Cossart P."/>
            <person name="Weissenbach J."/>
            <person name="Claverie J.-M."/>
            <person name="Raoult D."/>
        </authorList>
    </citation>
    <scope>NUCLEOTIDE SEQUENCE [LARGE SCALE GENOMIC DNA]</scope>
    <source>
        <strain>ATCC VR-613 / Malish 7</strain>
    </source>
</reference>
<proteinExistence type="uncertain"/>
<protein>
    <recommendedName>
        <fullName>Putative ecotin-like protein</fullName>
    </recommendedName>
</protein>
<feature type="chain" id="PRO_0000207171" description="Putative ecotin-like protein">
    <location>
        <begin position="1"/>
        <end position="68"/>
    </location>
</feature>
<comment type="similarity">
    <text evidence="1">Belongs to the protease inhibitor I11 (ecotin) family.</text>
</comment>
<comment type="caution">
    <text evidence="1">Could be the product of a pseudogene. It is N- and C-terminally truncated compared to othologs.</text>
</comment>
<accession>Q92GV5</accession>
<organism>
    <name type="scientific">Rickettsia conorii (strain ATCC VR-613 / Malish 7)</name>
    <dbReference type="NCBI Taxonomy" id="272944"/>
    <lineage>
        <taxon>Bacteria</taxon>
        <taxon>Pseudomonadati</taxon>
        <taxon>Pseudomonadota</taxon>
        <taxon>Alphaproteobacteria</taxon>
        <taxon>Rickettsiales</taxon>
        <taxon>Rickettsiaceae</taxon>
        <taxon>Rickettsieae</taxon>
        <taxon>Rickettsia</taxon>
        <taxon>spotted fever group</taxon>
    </lineage>
</organism>
<name>ECOTL_RICCN</name>
<dbReference type="EMBL" id="AE006914">
    <property type="protein sequence ID" value="AAL03555.1"/>
    <property type="molecule type" value="Genomic_DNA"/>
</dbReference>
<dbReference type="PIR" id="A97827">
    <property type="entry name" value="A97827"/>
</dbReference>
<dbReference type="SMR" id="Q92GV5"/>
<dbReference type="MEROPS" id="I11.001"/>
<dbReference type="KEGG" id="rco:RC1017"/>
<dbReference type="HOGENOM" id="CLU_182290_0_0_5"/>
<dbReference type="Proteomes" id="UP000000816">
    <property type="component" value="Chromosome"/>
</dbReference>
<dbReference type="GO" id="GO:0004867">
    <property type="term" value="F:serine-type endopeptidase inhibitor activity"/>
    <property type="evidence" value="ECO:0007669"/>
    <property type="project" value="InterPro"/>
</dbReference>
<dbReference type="Gene3D" id="2.60.40.550">
    <property type="entry name" value="Ecotin"/>
    <property type="match status" value="1"/>
</dbReference>
<dbReference type="InterPro" id="IPR036198">
    <property type="entry name" value="Ecotin_sf"/>
</dbReference>
<dbReference type="InterPro" id="IPR005658">
    <property type="entry name" value="Prot_inh_ecotin"/>
</dbReference>
<dbReference type="Pfam" id="PF03974">
    <property type="entry name" value="Ecotin"/>
    <property type="match status" value="1"/>
</dbReference>
<dbReference type="SUPFAM" id="SSF49772">
    <property type="entry name" value="Ecotin, trypsin inhibitor"/>
    <property type="match status" value="1"/>
</dbReference>
<evidence type="ECO:0000305" key="1"/>
<sequence length="68" mass="7654">MQATKNAMQDCNRVWFGGKLETKTLEGWGYNYYIIDQVSDHPASTMMACPNVKATIQTVSVFLGDETF</sequence>